<dbReference type="EMBL" id="S59041">
    <property type="protein sequence ID" value="AAB26239.1"/>
    <property type="molecule type" value="mRNA"/>
</dbReference>
<dbReference type="PIR" id="A48857">
    <property type="entry name" value="A48857"/>
</dbReference>
<dbReference type="RefSeq" id="NP_001075793.1">
    <property type="nucleotide sequence ID" value="NM_001082324.1"/>
</dbReference>
<dbReference type="SMR" id="P34976"/>
<dbReference type="FunCoup" id="P34976">
    <property type="interactions" value="325"/>
</dbReference>
<dbReference type="STRING" id="9986.ENSOCUP00000028622"/>
<dbReference type="BindingDB" id="P34976"/>
<dbReference type="ChEMBL" id="CHEMBL3948"/>
<dbReference type="DrugCentral" id="P34976"/>
<dbReference type="GlyCosmos" id="P34976">
    <property type="glycosylation" value="3 sites, No reported glycans"/>
</dbReference>
<dbReference type="PaxDb" id="9986-ENSOCUP00000024805"/>
<dbReference type="GeneID" id="100009164"/>
<dbReference type="KEGG" id="ocu:100009164"/>
<dbReference type="CTD" id="185"/>
<dbReference type="eggNOG" id="KOG3656">
    <property type="taxonomic scope" value="Eukaryota"/>
</dbReference>
<dbReference type="InParanoid" id="P34976"/>
<dbReference type="OrthoDB" id="8804420at2759"/>
<dbReference type="PRO" id="PR:P34976"/>
<dbReference type="Proteomes" id="UP000001811">
    <property type="component" value="Unplaced"/>
</dbReference>
<dbReference type="GO" id="GO:0009897">
    <property type="term" value="C:external side of plasma membrane"/>
    <property type="evidence" value="ECO:0007669"/>
    <property type="project" value="TreeGrafter"/>
</dbReference>
<dbReference type="GO" id="GO:0001596">
    <property type="term" value="F:angiotensin type I receptor activity"/>
    <property type="evidence" value="ECO:0000250"/>
    <property type="project" value="UniProtKB"/>
</dbReference>
<dbReference type="GO" id="GO:0004945">
    <property type="term" value="F:angiotensin type II receptor activity"/>
    <property type="evidence" value="ECO:0007669"/>
    <property type="project" value="InterPro"/>
</dbReference>
<dbReference type="GO" id="GO:0019957">
    <property type="term" value="F:C-C chemokine binding"/>
    <property type="evidence" value="ECO:0007669"/>
    <property type="project" value="TreeGrafter"/>
</dbReference>
<dbReference type="GO" id="GO:0016493">
    <property type="term" value="F:C-C chemokine receptor activity"/>
    <property type="evidence" value="ECO:0007669"/>
    <property type="project" value="TreeGrafter"/>
</dbReference>
<dbReference type="GO" id="GO:0019722">
    <property type="term" value="P:calcium-mediated signaling"/>
    <property type="evidence" value="ECO:0007669"/>
    <property type="project" value="TreeGrafter"/>
</dbReference>
<dbReference type="GO" id="GO:0006955">
    <property type="term" value="P:immune response"/>
    <property type="evidence" value="ECO:0007669"/>
    <property type="project" value="TreeGrafter"/>
</dbReference>
<dbReference type="GO" id="GO:0002034">
    <property type="term" value="P:maintenance of blood vessel diameter homeostasis by renin-angiotensin"/>
    <property type="evidence" value="ECO:0000250"/>
    <property type="project" value="UniProtKB"/>
</dbReference>
<dbReference type="GO" id="GO:0030593">
    <property type="term" value="P:neutrophil chemotaxis"/>
    <property type="evidence" value="ECO:0007669"/>
    <property type="project" value="TreeGrafter"/>
</dbReference>
<dbReference type="GO" id="GO:0007204">
    <property type="term" value="P:positive regulation of cytosolic calcium ion concentration"/>
    <property type="evidence" value="ECO:0007669"/>
    <property type="project" value="TreeGrafter"/>
</dbReference>
<dbReference type="GO" id="GO:0019229">
    <property type="term" value="P:regulation of vasoconstriction"/>
    <property type="evidence" value="ECO:0007669"/>
    <property type="project" value="InterPro"/>
</dbReference>
<dbReference type="CDD" id="cd15192">
    <property type="entry name" value="7tmA_AT1R"/>
    <property type="match status" value="1"/>
</dbReference>
<dbReference type="FunFam" id="1.20.1070.10:FF:000088">
    <property type="entry name" value="Angiotensin II receptor type 1"/>
    <property type="match status" value="1"/>
</dbReference>
<dbReference type="Gene3D" id="1.20.1070.10">
    <property type="entry name" value="Rhodopsin 7-helix transmembrane proteins"/>
    <property type="match status" value="1"/>
</dbReference>
<dbReference type="InterPro" id="IPR000190">
    <property type="entry name" value="ATII_AT1_rcpt"/>
</dbReference>
<dbReference type="InterPro" id="IPR000248">
    <property type="entry name" value="ATII_rcpt"/>
</dbReference>
<dbReference type="InterPro" id="IPR050119">
    <property type="entry name" value="CCR1-9-like"/>
</dbReference>
<dbReference type="InterPro" id="IPR000276">
    <property type="entry name" value="GPCR_Rhodpsn"/>
</dbReference>
<dbReference type="InterPro" id="IPR017452">
    <property type="entry name" value="GPCR_Rhodpsn_7TM"/>
</dbReference>
<dbReference type="PANTHER" id="PTHR10489">
    <property type="entry name" value="CELL ADHESION MOLECULE"/>
    <property type="match status" value="1"/>
</dbReference>
<dbReference type="PANTHER" id="PTHR10489:SF956">
    <property type="entry name" value="TYPE-1 ANGIOTENSIN II RECEPTOR A"/>
    <property type="match status" value="1"/>
</dbReference>
<dbReference type="Pfam" id="PF00001">
    <property type="entry name" value="7tm_1"/>
    <property type="match status" value="1"/>
</dbReference>
<dbReference type="PRINTS" id="PR00241">
    <property type="entry name" value="ANGIOTENSINR"/>
</dbReference>
<dbReference type="PRINTS" id="PR00635">
    <property type="entry name" value="ANGIOTENSN1R"/>
</dbReference>
<dbReference type="PRINTS" id="PR00237">
    <property type="entry name" value="GPCRRHODOPSN"/>
</dbReference>
<dbReference type="SMART" id="SM01381">
    <property type="entry name" value="7TM_GPCR_Srsx"/>
    <property type="match status" value="1"/>
</dbReference>
<dbReference type="SUPFAM" id="SSF81321">
    <property type="entry name" value="Family A G protein-coupled receptor-like"/>
    <property type="match status" value="1"/>
</dbReference>
<dbReference type="PROSITE" id="PS00237">
    <property type="entry name" value="G_PROTEIN_RECEP_F1_1"/>
    <property type="match status" value="1"/>
</dbReference>
<dbReference type="PROSITE" id="PS50262">
    <property type="entry name" value="G_PROTEIN_RECEP_F1_2"/>
    <property type="match status" value="1"/>
</dbReference>
<evidence type="ECO:0000250" key="1">
    <source>
        <dbReference type="UniProtKB" id="P25095"/>
    </source>
</evidence>
<evidence type="ECO:0000250" key="2">
    <source>
        <dbReference type="UniProtKB" id="P30556"/>
    </source>
</evidence>
<evidence type="ECO:0000255" key="3"/>
<evidence type="ECO:0000255" key="4">
    <source>
        <dbReference type="PROSITE-ProRule" id="PRU00521"/>
    </source>
</evidence>
<evidence type="ECO:0000256" key="5">
    <source>
        <dbReference type="SAM" id="MobiDB-lite"/>
    </source>
</evidence>
<proteinExistence type="evidence at transcript level"/>
<feature type="chain" id="PRO_0000069159" description="Type-1 angiotensin II receptor">
    <location>
        <begin position="1"/>
        <end position="359"/>
    </location>
</feature>
<feature type="topological domain" description="Extracellular" evidence="2">
    <location>
        <begin position="1"/>
        <end position="25"/>
    </location>
</feature>
<feature type="transmembrane region" description="Helical; Name=1" evidence="2">
    <location>
        <begin position="26"/>
        <end position="55"/>
    </location>
</feature>
<feature type="topological domain" description="Cytoplasmic" evidence="2">
    <location>
        <begin position="56"/>
        <end position="61"/>
    </location>
</feature>
<feature type="transmembrane region" description="Helical; Name=2" evidence="2">
    <location>
        <begin position="62"/>
        <end position="89"/>
    </location>
</feature>
<feature type="topological domain" description="Extracellular" evidence="2">
    <location>
        <begin position="90"/>
        <end position="98"/>
    </location>
</feature>
<feature type="transmembrane region" description="Helical; Name=3" evidence="2">
    <location>
        <begin position="99"/>
        <end position="125"/>
    </location>
</feature>
<feature type="topological domain" description="Cytoplasmic" evidence="2">
    <location>
        <begin position="126"/>
        <end position="141"/>
    </location>
</feature>
<feature type="transmembrane region" description="Helical; Name=4" evidence="2">
    <location>
        <begin position="142"/>
        <end position="165"/>
    </location>
</feature>
<feature type="topological domain" description="Extracellular" evidence="2">
    <location>
        <begin position="166"/>
        <end position="190"/>
    </location>
</feature>
<feature type="transmembrane region" description="Helical; Name=5" evidence="2">
    <location>
        <begin position="191"/>
        <end position="216"/>
    </location>
</feature>
<feature type="topological domain" description="Cytoplasmic" evidence="2">
    <location>
        <begin position="217"/>
        <end position="239"/>
    </location>
</feature>
<feature type="transmembrane region" description="Helical; Name=6" evidence="2">
    <location>
        <begin position="240"/>
        <end position="268"/>
    </location>
</feature>
<feature type="topological domain" description="Extracellular" evidence="2">
    <location>
        <begin position="269"/>
        <end position="278"/>
    </location>
</feature>
<feature type="transmembrane region" description="Helical; Name=7" evidence="2">
    <location>
        <begin position="279"/>
        <end position="304"/>
    </location>
</feature>
<feature type="topological domain" description="Cytoplasmic" evidence="2">
    <location>
        <begin position="305"/>
        <end position="359"/>
    </location>
</feature>
<feature type="region of interest" description="Disordered" evidence="5">
    <location>
        <begin position="335"/>
        <end position="359"/>
    </location>
</feature>
<feature type="compositionally biased region" description="Polar residues" evidence="5">
    <location>
        <begin position="335"/>
        <end position="350"/>
    </location>
</feature>
<feature type="binding site" evidence="2">
    <location>
        <position position="15"/>
    </location>
    <ligand>
        <name>angiotensin II</name>
        <dbReference type="ChEBI" id="CHEBI:58506"/>
    </ligand>
</feature>
<feature type="binding site" evidence="2">
    <location>
        <position position="17"/>
    </location>
    <ligand>
        <name>angiotensin II</name>
        <dbReference type="ChEBI" id="CHEBI:58506"/>
    </ligand>
</feature>
<feature type="binding site" evidence="2">
    <location>
        <position position="167"/>
    </location>
    <ligand>
        <name>angiotensin II</name>
        <dbReference type="ChEBI" id="CHEBI:58506"/>
    </ligand>
</feature>
<feature type="binding site" evidence="2">
    <location>
        <position position="182"/>
    </location>
    <ligand>
        <name>angiotensin II</name>
        <dbReference type="ChEBI" id="CHEBI:58506"/>
    </ligand>
</feature>
<feature type="binding site" evidence="2">
    <location>
        <position position="183"/>
    </location>
    <ligand>
        <name>angiotensin II</name>
        <dbReference type="ChEBI" id="CHEBI:58506"/>
    </ligand>
</feature>
<feature type="binding site" evidence="2">
    <location>
        <position position="184"/>
    </location>
    <ligand>
        <name>angiotensin II</name>
        <dbReference type="ChEBI" id="CHEBI:58506"/>
    </ligand>
</feature>
<feature type="binding site" evidence="2">
    <location>
        <position position="199"/>
    </location>
    <ligand>
        <name>angiotensin II</name>
        <dbReference type="ChEBI" id="CHEBI:58506"/>
    </ligand>
</feature>
<feature type="lipid moiety-binding region" description="S-palmitoyl cysteine" evidence="3">
    <location>
        <position position="355"/>
    </location>
</feature>
<feature type="glycosylation site" description="N-linked (GlcNAc...) asparagine" evidence="3">
    <location>
        <position position="4"/>
    </location>
</feature>
<feature type="glycosylation site" description="N-linked (GlcNAc...) asparagine" evidence="3">
    <location>
        <position position="176"/>
    </location>
</feature>
<feature type="glycosylation site" description="N-linked (GlcNAc...) asparagine" evidence="3">
    <location>
        <position position="188"/>
    </location>
</feature>
<feature type="disulfide bond" evidence="2">
    <location>
        <begin position="18"/>
        <end position="274"/>
    </location>
</feature>
<feature type="disulfide bond" evidence="4">
    <location>
        <begin position="101"/>
        <end position="180"/>
    </location>
</feature>
<sequence length="359" mass="40990">MMLNSSTEDGIKRIQDDCPKAGRHNYIFVMIPTLYSIIFVVGIFGNSLAVIVIYFYMKLKTVASVFLLNLALADLCFLLTLPLWAVYTAMEYRWPFGNYLCKIASASVSFNLYASVFLLTCLSIDRYLAIVHPMKSRLRRTMLVAKVTCIIIWLLAGLASLPAIIHRNVFFIENTNITVCAFHYESQNSTLPIGLGLTKNILGFLFPFLIILTSYTLIWKALKKAYEIQKNKPRNDDIFKIIMAIVLFFFFSWVPHQIFTFLDVLIQLGVIHDCRIADIVDTAMPITICIAYFNNCLNPLFYGFLGKKFKKYFLQLLKYIPPKAKSHSNLSTKMSTLSYRPSDNVSSSSKKPVPCFEVE</sequence>
<gene>
    <name type="primary">AGTR1</name>
</gene>
<organism>
    <name type="scientific">Oryctolagus cuniculus</name>
    <name type="common">Rabbit</name>
    <dbReference type="NCBI Taxonomy" id="9986"/>
    <lineage>
        <taxon>Eukaryota</taxon>
        <taxon>Metazoa</taxon>
        <taxon>Chordata</taxon>
        <taxon>Craniata</taxon>
        <taxon>Vertebrata</taxon>
        <taxon>Euteleostomi</taxon>
        <taxon>Mammalia</taxon>
        <taxon>Eutheria</taxon>
        <taxon>Euarchontoglires</taxon>
        <taxon>Glires</taxon>
        <taxon>Lagomorpha</taxon>
        <taxon>Leporidae</taxon>
        <taxon>Oryctolagus</taxon>
    </lineage>
</organism>
<accession>P34976</accession>
<protein>
    <recommendedName>
        <fullName>Type-1 angiotensin II receptor</fullName>
    </recommendedName>
    <alternativeName>
        <fullName>Angiotensin II type-1 receptor</fullName>
        <shortName>AT1 receptor</shortName>
    </alternativeName>
</protein>
<name>AGTR1_RABIT</name>
<keyword id="KW-1003">Cell membrane</keyword>
<keyword id="KW-1015">Disulfide bond</keyword>
<keyword id="KW-0297">G-protein coupled receptor</keyword>
<keyword id="KW-0325">Glycoprotein</keyword>
<keyword id="KW-0449">Lipoprotein</keyword>
<keyword id="KW-0472">Membrane</keyword>
<keyword id="KW-0564">Palmitate</keyword>
<keyword id="KW-0597">Phosphoprotein</keyword>
<keyword id="KW-0675">Receptor</keyword>
<keyword id="KW-1185">Reference proteome</keyword>
<keyword id="KW-0807">Transducer</keyword>
<keyword id="KW-0812">Transmembrane</keyword>
<keyword id="KW-1133">Transmembrane helix</keyword>
<reference key="1">
    <citation type="journal article" date="1993" name="Am. J. Physiol.">
        <title>Cloning of a rabbit kidney cortex AT1 angiotensin II receptor that is present in proximal tubule epithelium.</title>
        <authorList>
            <person name="Burns K.D."/>
            <person name="Inagami T."/>
            <person name="Harris R.C."/>
        </authorList>
    </citation>
    <scope>NUCLEOTIDE SEQUENCE [MRNA]</scope>
    <source>
        <tissue>Kidney</tissue>
    </source>
</reference>
<comment type="function">
    <text evidence="2">Receptor for angiotensin II, a vasoconstricting peptide, which acts as a key regulator of blood pressure and sodium retention by the kidney. The activated receptor in turn couples to G-alpha proteins G(q) (GNAQ, GNA11, GNA14 or GNA15) and thus activates phospholipase C and increases the cytosolic Ca(2+) concentrations, which in turn triggers cellular responses such as stimulation of protein kinase C.</text>
</comment>
<comment type="subunit">
    <text evidence="1 2">Interacts with MAS1 (By similarity). Interacts with ARRB1 (By similarity). Interacts with FLNA (via filamin repeat 21); increases PKA-mediated phosphorylation of FLNA (By similarity).</text>
</comment>
<comment type="subcellular location">
    <subcellularLocation>
        <location evidence="2">Cell membrane</location>
        <topology evidence="2">Multi-pass membrane protein</topology>
    </subcellularLocation>
</comment>
<comment type="PTM">
    <text evidence="2">C-terminal Ser or Thr residues may be phosphorylated.</text>
</comment>
<comment type="similarity">
    <text evidence="4">Belongs to the G-protein coupled receptor 1 family.</text>
</comment>